<sequence>MLWALFFLVTTIHAELCHPDAENAFKVRLSIRAALGDKAYVWDTDQEYLFRAMVAFSMRKVPNREATEISHVLLCNITQRVSFWFVVTDPSNNYTLPAAEVQSAIRKNRNRINSAFFLDDHTLEFLKIPSTLAPPMEPSVPVWIIVFGVIFCIVTVAIALLVLSGIRQRRRNNKGPPGVEDAEDKCENIITIENGIPCDPLDMKGGHINDGFLTEDERLTPL</sequence>
<feature type="signal peptide" evidence="2">
    <location>
        <begin position="1"/>
        <end position="14"/>
    </location>
</feature>
<feature type="chain" id="PRO_0000245868" description="Collectrin">
    <location>
        <begin position="15"/>
        <end position="222"/>
    </location>
</feature>
<feature type="topological domain" description="Extracellular" evidence="1">
    <location>
        <begin position="15"/>
        <end position="141"/>
    </location>
</feature>
<feature type="transmembrane region" description="Helical" evidence="3">
    <location>
        <begin position="142"/>
        <end position="162"/>
    </location>
</feature>
<feature type="topological domain" description="Cytoplasmic" evidence="1">
    <location>
        <begin position="163"/>
        <end position="222"/>
    </location>
</feature>
<feature type="domain" description="Collectrin-like" evidence="3">
    <location>
        <begin position="21"/>
        <end position="222"/>
    </location>
</feature>
<feature type="site" description="Cleavage by BACE2" evidence="1">
    <location>
        <begin position="125"/>
        <end position="126"/>
    </location>
</feature>
<feature type="modified residue" description="Phosphothreonine" evidence="16">
    <location>
        <position position="214"/>
    </location>
</feature>
<feature type="modified residue" description="Phosphothreonine" evidence="16">
    <location>
        <position position="220"/>
    </location>
</feature>
<feature type="glycosylation site" description="N-linked (GlcNAc...) asparagine" evidence="2">
    <location>
        <position position="76"/>
    </location>
</feature>
<feature type="glycosylation site" description="N-linked (GlcNAc...) asparagine" evidence="2">
    <location>
        <position position="93"/>
    </location>
</feature>
<feature type="sequence conflict" description="In Ref. 3; BAE28605." evidence="14" ref="3">
    <original>G</original>
    <variation>R</variation>
    <location>
        <position position="206"/>
    </location>
</feature>
<dbReference type="EMBL" id="AF178085">
    <property type="protein sequence ID" value="AAG09306.1"/>
    <property type="molecule type" value="mRNA"/>
</dbReference>
<dbReference type="EMBL" id="AK002337">
    <property type="protein sequence ID" value="BAB22022.1"/>
    <property type="molecule type" value="mRNA"/>
</dbReference>
<dbReference type="EMBL" id="AK148534">
    <property type="protein sequence ID" value="BAE28605.1"/>
    <property type="molecule type" value="mRNA"/>
</dbReference>
<dbReference type="EMBL" id="BC049912">
    <property type="protein sequence ID" value="AAH49912.1"/>
    <property type="molecule type" value="mRNA"/>
</dbReference>
<dbReference type="CCDS" id="CCDS30517.1"/>
<dbReference type="RefSeq" id="NP_001300648.1">
    <property type="nucleotide sequence ID" value="NM_001313719.1"/>
</dbReference>
<dbReference type="RefSeq" id="NP_065651.1">
    <property type="nucleotide sequence ID" value="NM_020626.2"/>
</dbReference>
<dbReference type="SMR" id="Q9ESG4"/>
<dbReference type="CORUM" id="Q9ESG4"/>
<dbReference type="DIP" id="DIP-60420N"/>
<dbReference type="FunCoup" id="Q9ESG4">
    <property type="interactions" value="231"/>
</dbReference>
<dbReference type="IntAct" id="Q9ESG4">
    <property type="interactions" value="3"/>
</dbReference>
<dbReference type="STRING" id="10090.ENSMUSP00000107899"/>
<dbReference type="GlyCosmos" id="Q9ESG4">
    <property type="glycosylation" value="2 sites, No reported glycans"/>
</dbReference>
<dbReference type="GlyGen" id="Q9ESG4">
    <property type="glycosylation" value="2 sites"/>
</dbReference>
<dbReference type="iPTMnet" id="Q9ESG4"/>
<dbReference type="PhosphoSitePlus" id="Q9ESG4"/>
<dbReference type="jPOST" id="Q9ESG4"/>
<dbReference type="PaxDb" id="10090-ENSMUSP00000107899"/>
<dbReference type="PeptideAtlas" id="Q9ESG4"/>
<dbReference type="ProteomicsDB" id="259032"/>
<dbReference type="ABCD" id="Q9ESG4">
    <property type="antibodies" value="5 sequenced antibodies"/>
</dbReference>
<dbReference type="DNASU" id="57394"/>
<dbReference type="Ensembl" id="ENSMUST00000015545.10">
    <property type="protein sequence ID" value="ENSMUSP00000015545.4"/>
    <property type="gene ID" value="ENSMUSG00000015401.13"/>
</dbReference>
<dbReference type="Ensembl" id="ENSMUST00000112280.8">
    <property type="protein sequence ID" value="ENSMUSP00000107899.2"/>
    <property type="gene ID" value="ENSMUSG00000015401.13"/>
</dbReference>
<dbReference type="GeneID" id="57394"/>
<dbReference type="KEGG" id="mmu:57394"/>
<dbReference type="UCSC" id="uc009uve.1">
    <property type="organism name" value="mouse"/>
</dbReference>
<dbReference type="AGR" id="MGI:1926234"/>
<dbReference type="CTD" id="57393"/>
<dbReference type="MGI" id="MGI:1926234">
    <property type="gene designation" value="Cltrn"/>
</dbReference>
<dbReference type="VEuPathDB" id="HostDB:ENSMUSG00000015401"/>
<dbReference type="eggNOG" id="ENOG502RWVW">
    <property type="taxonomic scope" value="Eukaryota"/>
</dbReference>
<dbReference type="GeneTree" id="ENSGT00940000160862"/>
<dbReference type="HOGENOM" id="CLU_108544_0_0_1"/>
<dbReference type="InParanoid" id="Q9ESG4"/>
<dbReference type="OMA" id="AYEWNES"/>
<dbReference type="OrthoDB" id="9899436at2759"/>
<dbReference type="PhylomeDB" id="Q9ESG4"/>
<dbReference type="TreeFam" id="TF335519"/>
<dbReference type="BioGRID-ORCS" id="57394">
    <property type="hits" value="1 hit in 79 CRISPR screens"/>
</dbReference>
<dbReference type="ChiTaRS" id="Cltrn">
    <property type="organism name" value="mouse"/>
</dbReference>
<dbReference type="PRO" id="PR:Q9ESG4"/>
<dbReference type="Proteomes" id="UP000000589">
    <property type="component" value="Chromosome X"/>
</dbReference>
<dbReference type="RNAct" id="Q9ESG4">
    <property type="molecule type" value="protein"/>
</dbReference>
<dbReference type="Bgee" id="ENSMUSG00000015401">
    <property type="expression patterns" value="Expressed in right kidney and 105 other cell types or tissues"/>
</dbReference>
<dbReference type="ExpressionAtlas" id="Q9ESG4">
    <property type="expression patterns" value="baseline and differential"/>
</dbReference>
<dbReference type="GO" id="GO:0031526">
    <property type="term" value="C:brush border membrane"/>
    <property type="evidence" value="ECO:0000314"/>
    <property type="project" value="MGI"/>
</dbReference>
<dbReference type="GO" id="GO:0005737">
    <property type="term" value="C:cytoplasm"/>
    <property type="evidence" value="ECO:0007669"/>
    <property type="project" value="Ensembl"/>
</dbReference>
<dbReference type="GO" id="GO:0005886">
    <property type="term" value="C:plasma membrane"/>
    <property type="evidence" value="ECO:0000314"/>
    <property type="project" value="UniProtKB"/>
</dbReference>
<dbReference type="GO" id="GO:0042803">
    <property type="term" value="F:protein homodimerization activity"/>
    <property type="evidence" value="ECO:0000314"/>
    <property type="project" value="UniProtKB"/>
</dbReference>
<dbReference type="GO" id="GO:0141109">
    <property type="term" value="F:transporter activator activity"/>
    <property type="evidence" value="ECO:0007669"/>
    <property type="project" value="Ensembl"/>
</dbReference>
<dbReference type="GO" id="GO:0017156">
    <property type="term" value="P:calcium-ion regulated exocytosis"/>
    <property type="evidence" value="ECO:0007669"/>
    <property type="project" value="Ensembl"/>
</dbReference>
<dbReference type="GO" id="GO:0035773">
    <property type="term" value="P:insulin secretion involved in cellular response to glucose stimulus"/>
    <property type="evidence" value="ECO:0007669"/>
    <property type="project" value="Ensembl"/>
</dbReference>
<dbReference type="GO" id="GO:0051957">
    <property type="term" value="P:positive regulation of amino acid transport"/>
    <property type="evidence" value="ECO:0000314"/>
    <property type="project" value="MGI"/>
</dbReference>
<dbReference type="GO" id="GO:1905737">
    <property type="term" value="P:positive regulation of L-proline import across plasma membrane"/>
    <property type="evidence" value="ECO:0007669"/>
    <property type="project" value="Ensembl"/>
</dbReference>
<dbReference type="GO" id="GO:0035493">
    <property type="term" value="P:SNARE complex assembly"/>
    <property type="evidence" value="ECO:0007669"/>
    <property type="project" value="Ensembl"/>
</dbReference>
<dbReference type="InterPro" id="IPR042944">
    <property type="entry name" value="Collectrin"/>
</dbReference>
<dbReference type="InterPro" id="IPR031588">
    <property type="entry name" value="Collectrin_dom"/>
</dbReference>
<dbReference type="PANTHER" id="PTHR46884">
    <property type="entry name" value="COLLECTRIN"/>
    <property type="match status" value="1"/>
</dbReference>
<dbReference type="PANTHER" id="PTHR46884:SF1">
    <property type="entry name" value="COLLECTRIN"/>
    <property type="match status" value="1"/>
</dbReference>
<dbReference type="Pfam" id="PF16959">
    <property type="entry name" value="Collectrin"/>
    <property type="match status" value="1"/>
</dbReference>
<dbReference type="PROSITE" id="PS52010">
    <property type="entry name" value="COLLECTRIN_LIKE"/>
    <property type="match status" value="1"/>
</dbReference>
<name>CLTRN_MOUSE</name>
<protein>
    <recommendedName>
        <fullName>Collectrin</fullName>
    </recommendedName>
    <alternativeName>
        <fullName>Transmembrane protein 27</fullName>
    </alternativeName>
</protein>
<evidence type="ECO:0000250" key="1">
    <source>
        <dbReference type="UniProtKB" id="Q9HBJ8"/>
    </source>
</evidence>
<evidence type="ECO:0000255" key="2"/>
<evidence type="ECO:0000255" key="3">
    <source>
        <dbReference type="PROSITE-ProRule" id="PRU01354"/>
    </source>
</evidence>
<evidence type="ECO:0000269" key="4">
    <source>
    </source>
</evidence>
<evidence type="ECO:0000269" key="5">
    <source>
    </source>
</evidence>
<evidence type="ECO:0000269" key="6">
    <source>
    </source>
</evidence>
<evidence type="ECO:0000269" key="7">
    <source>
    </source>
</evidence>
<evidence type="ECO:0000269" key="8">
    <source>
    </source>
</evidence>
<evidence type="ECO:0000269" key="9">
    <source>
    </source>
</evidence>
<evidence type="ECO:0000269" key="10">
    <source>
    </source>
</evidence>
<evidence type="ECO:0000269" key="11">
    <source>
    </source>
</evidence>
<evidence type="ECO:0000269" key="12">
    <source>
    </source>
</evidence>
<evidence type="ECO:0000303" key="13">
    <source>
    </source>
</evidence>
<evidence type="ECO:0000305" key="14"/>
<evidence type="ECO:0000312" key="15">
    <source>
        <dbReference type="MGI" id="MGI:1926234"/>
    </source>
</evidence>
<evidence type="ECO:0007744" key="16">
    <source>
    </source>
</evidence>
<accession>Q9ESG4</accession>
<accession>Q3UFF6</accession>
<keyword id="KW-1003">Cell membrane</keyword>
<keyword id="KW-0325">Glycoprotein</keyword>
<keyword id="KW-0472">Membrane</keyword>
<keyword id="KW-0597">Phosphoprotein</keyword>
<keyword id="KW-1185">Reference proteome</keyword>
<keyword id="KW-0732">Signal</keyword>
<keyword id="KW-0812">Transmembrane</keyword>
<keyword id="KW-1133">Transmembrane helix</keyword>
<comment type="function">
    <text evidence="5 6 7 8">Plays an important role in amino acid transport by acting as binding partner of amino acid transporters SLC6A18 and SLC6A19, regulating their trafficking on the cell surface and their activity (PubMed:16985211, PubMed:17167413). May also play a role in trafficking of amino acid transporters SLC3A1 and SLC7A9 to the renal cortical cell membrane (PubMed:16985211). Regulator of SNARE complex function (PubMed:16330323). Stimulator of beta cell replication (PubMed:16330324).</text>
</comment>
<comment type="subunit">
    <text evidence="5 6 8 9">Monomer (PubMed:16330324). Homodimer (PubMed:16330324). Homodimer; dimerization prevents CLTRN cleavage by BACE2 (PubMed:16330324). Interacts with SNAPIN (PubMed:16330323). Interacts with SLC6A18; this interaction regulates the trafficking of SLC6A18 to the cell membrane and its amino acid transporter activity (PubMed:17167413, PubMed:19478081). Interacts with SLC6A19; this interaction regulates the trafficking of SLC6A19 to the cell membrane and its amino acid transporter activity (PubMed:17167413). Interacts with SLC6A20B (PubMed:17167413).</text>
</comment>
<comment type="subcellular location">
    <subcellularLocation>
        <location evidence="6 8">Cell membrane</location>
        <topology evidence="2">Single-pass type I membrane protein</topology>
    </subcellularLocation>
    <text evidence="8">Localizes to the brush border membranes of cells in the proximal tubules of kidney (PubMed:17167413). Colocalizes with SLC6A19 in the early proximal S1 tubule (PubMed:17167413).</text>
</comment>
<comment type="tissue specificity">
    <text evidence="4 5 6 7 8 12">Expressed on the apical surface of the proximal tubules in the renal cortex (at protein level) (PubMed:16985211). Kidney; collecting ducts and proximal tubule (PubMed:11278314, PubMed:16985211, PubMed:17167413). Pancreas; beta cells of islets (PubMed:16330323, PubMed:16330324). Expressed in the cerebral cortex, hippocampus, brainstem and cerebellum (PubMed:31520464).</text>
</comment>
<comment type="induction">
    <text evidence="10">Up-regulated by high glucose concentration in beta-cells (at protein level).</text>
</comment>
<comment type="domain">
    <text evidence="1">The cleavage site containing the double Phe-Phe motif acts as negative regulator of shedding by BACE2.</text>
</comment>
<comment type="PTM">
    <text evidence="1">Glycosylated. Glycosylation is required for plasma membrane localization and for its cleavage by BACE2.</text>
</comment>
<comment type="PTM">
    <text evidence="1 6 11">Proteolytically processed in pancreatic beta cells by BACE2 leading to the generation and extracellular release of soluble CLTRN, and a corresponding cell-associated C-terminal fragment which is later cleaved by gamma-secretase (PubMed:16330324, PubMed:21907142). This shedding process inactivates CLTRN (PubMed:16330324). Three cleavage sites have been identified for BACE2, two clustered sites after Phe-116 and Leu-118 and a more membrane proximal site at Phe-125; the preferred BACE2 cleavage site seems to be between Phe-125 and Leu-126, Phe-116 and Leu-118 act as alternative sites (By similarity).</text>
</comment>
<comment type="disruption phenotype">
    <text evidence="7 8">Deficient mice are viable and fertile but exhibit a severe defect in renal amino acid uptake due to down-regulation of apical amino acid transporters in the kidney (PubMed:17167413). Greater urine output, more dilute urine, a defect in urinary concentration, higher osmolar clearance and an increase in free water absorption, suggesting an osmotic diuresis (PubMed:16985211). Decreased urine osmolytes sodium and urea, presence of tyrosine and glutamine crystals in the urine, and increased excretion of amino acids in the urine, suggesting an aminoaciduria (PubMed:16985211). Decreased population of amino acid transporters SLC6A19, SLC3A1 and SLC7A9 in the renal cortical cell membrane (PubMed:16985211). Increased intracellular SLC1A1 levels (PubMed:16985211).</text>
</comment>
<comment type="similarity">
    <text evidence="14">Belongs to the CLTRN family.</text>
</comment>
<organism>
    <name type="scientific">Mus musculus</name>
    <name type="common">Mouse</name>
    <dbReference type="NCBI Taxonomy" id="10090"/>
    <lineage>
        <taxon>Eukaryota</taxon>
        <taxon>Metazoa</taxon>
        <taxon>Chordata</taxon>
        <taxon>Craniata</taxon>
        <taxon>Vertebrata</taxon>
        <taxon>Euteleostomi</taxon>
        <taxon>Mammalia</taxon>
        <taxon>Eutheria</taxon>
        <taxon>Euarchontoglires</taxon>
        <taxon>Glires</taxon>
        <taxon>Rodentia</taxon>
        <taxon>Myomorpha</taxon>
        <taxon>Muroidea</taxon>
        <taxon>Muridae</taxon>
        <taxon>Murinae</taxon>
        <taxon>Mus</taxon>
        <taxon>Mus</taxon>
    </lineage>
</organism>
<gene>
    <name evidence="15" type="primary">Cltrn</name>
    <name type="synonym">Nx17</name>
    <name evidence="13" type="synonym">Tmem27</name>
</gene>
<proteinExistence type="evidence at protein level"/>
<reference key="1">
    <citation type="journal article" date="1999" name="Kidney Int.">
        <title>Screening for genes up-regulated in 5/6 nephrectomized mouse kidney.</title>
        <authorList>
            <person name="Zhang H."/>
            <person name="Wada J."/>
            <person name="Kanwar Y.S."/>
            <person name="Tsuchiyama Y."/>
            <person name="Hiragushi K."/>
            <person name="Hida K."/>
            <person name="Shikata K."/>
            <person name="Makino H."/>
        </authorList>
    </citation>
    <scope>NUCLEOTIDE SEQUENCE [MRNA]</scope>
    <source>
        <strain>ICR</strain>
    </source>
</reference>
<reference key="2">
    <citation type="journal article" date="2001" name="J. Biol. Chem.">
        <title>Collectrin, a collecting duct-specific transmembrane glycoprotein, is a novel homolog of ACE2 and is developmentally regulated in embryonic kidneys.</title>
        <authorList>
            <person name="Zhang H."/>
            <person name="Wada J."/>
            <person name="Hida K."/>
            <person name="Tsuchiyama Y."/>
            <person name="Hiragushi K."/>
            <person name="Shikata K."/>
            <person name="Wang H."/>
            <person name="Lin S."/>
            <person name="Kanwar Y.S."/>
            <person name="Makino H."/>
        </authorList>
    </citation>
    <scope>NUCLEOTIDE SEQUENCE [MRNA]</scope>
    <scope>TISSUE SPECIFICITY</scope>
    <source>
        <strain>ICR</strain>
    </source>
</reference>
<reference key="3">
    <citation type="journal article" date="2005" name="Science">
        <title>The transcriptional landscape of the mammalian genome.</title>
        <authorList>
            <person name="Carninci P."/>
            <person name="Kasukawa T."/>
            <person name="Katayama S."/>
            <person name="Gough J."/>
            <person name="Frith M.C."/>
            <person name="Maeda N."/>
            <person name="Oyama R."/>
            <person name="Ravasi T."/>
            <person name="Lenhard B."/>
            <person name="Wells C."/>
            <person name="Kodzius R."/>
            <person name="Shimokawa K."/>
            <person name="Bajic V.B."/>
            <person name="Brenner S.E."/>
            <person name="Batalov S."/>
            <person name="Forrest A.R."/>
            <person name="Zavolan M."/>
            <person name="Davis M.J."/>
            <person name="Wilming L.G."/>
            <person name="Aidinis V."/>
            <person name="Allen J.E."/>
            <person name="Ambesi-Impiombato A."/>
            <person name="Apweiler R."/>
            <person name="Aturaliya R.N."/>
            <person name="Bailey T.L."/>
            <person name="Bansal M."/>
            <person name="Baxter L."/>
            <person name="Beisel K.W."/>
            <person name="Bersano T."/>
            <person name="Bono H."/>
            <person name="Chalk A.M."/>
            <person name="Chiu K.P."/>
            <person name="Choudhary V."/>
            <person name="Christoffels A."/>
            <person name="Clutterbuck D.R."/>
            <person name="Crowe M.L."/>
            <person name="Dalla E."/>
            <person name="Dalrymple B.P."/>
            <person name="de Bono B."/>
            <person name="Della Gatta G."/>
            <person name="di Bernardo D."/>
            <person name="Down T."/>
            <person name="Engstrom P."/>
            <person name="Fagiolini M."/>
            <person name="Faulkner G."/>
            <person name="Fletcher C.F."/>
            <person name="Fukushima T."/>
            <person name="Furuno M."/>
            <person name="Futaki S."/>
            <person name="Gariboldi M."/>
            <person name="Georgii-Hemming P."/>
            <person name="Gingeras T.R."/>
            <person name="Gojobori T."/>
            <person name="Green R.E."/>
            <person name="Gustincich S."/>
            <person name="Harbers M."/>
            <person name="Hayashi Y."/>
            <person name="Hensch T.K."/>
            <person name="Hirokawa N."/>
            <person name="Hill D."/>
            <person name="Huminiecki L."/>
            <person name="Iacono M."/>
            <person name="Ikeo K."/>
            <person name="Iwama A."/>
            <person name="Ishikawa T."/>
            <person name="Jakt M."/>
            <person name="Kanapin A."/>
            <person name="Katoh M."/>
            <person name="Kawasawa Y."/>
            <person name="Kelso J."/>
            <person name="Kitamura H."/>
            <person name="Kitano H."/>
            <person name="Kollias G."/>
            <person name="Krishnan S.P."/>
            <person name="Kruger A."/>
            <person name="Kummerfeld S.K."/>
            <person name="Kurochkin I.V."/>
            <person name="Lareau L.F."/>
            <person name="Lazarevic D."/>
            <person name="Lipovich L."/>
            <person name="Liu J."/>
            <person name="Liuni S."/>
            <person name="McWilliam S."/>
            <person name="Madan Babu M."/>
            <person name="Madera M."/>
            <person name="Marchionni L."/>
            <person name="Matsuda H."/>
            <person name="Matsuzawa S."/>
            <person name="Miki H."/>
            <person name="Mignone F."/>
            <person name="Miyake S."/>
            <person name="Morris K."/>
            <person name="Mottagui-Tabar S."/>
            <person name="Mulder N."/>
            <person name="Nakano N."/>
            <person name="Nakauchi H."/>
            <person name="Ng P."/>
            <person name="Nilsson R."/>
            <person name="Nishiguchi S."/>
            <person name="Nishikawa S."/>
            <person name="Nori F."/>
            <person name="Ohara O."/>
            <person name="Okazaki Y."/>
            <person name="Orlando V."/>
            <person name="Pang K.C."/>
            <person name="Pavan W.J."/>
            <person name="Pavesi G."/>
            <person name="Pesole G."/>
            <person name="Petrovsky N."/>
            <person name="Piazza S."/>
            <person name="Reed J."/>
            <person name="Reid J.F."/>
            <person name="Ring B.Z."/>
            <person name="Ringwald M."/>
            <person name="Rost B."/>
            <person name="Ruan Y."/>
            <person name="Salzberg S.L."/>
            <person name="Sandelin A."/>
            <person name="Schneider C."/>
            <person name="Schoenbach C."/>
            <person name="Sekiguchi K."/>
            <person name="Semple C.A."/>
            <person name="Seno S."/>
            <person name="Sessa L."/>
            <person name="Sheng Y."/>
            <person name="Shibata Y."/>
            <person name="Shimada H."/>
            <person name="Shimada K."/>
            <person name="Silva D."/>
            <person name="Sinclair B."/>
            <person name="Sperling S."/>
            <person name="Stupka E."/>
            <person name="Sugiura K."/>
            <person name="Sultana R."/>
            <person name="Takenaka Y."/>
            <person name="Taki K."/>
            <person name="Tammoja K."/>
            <person name="Tan S.L."/>
            <person name="Tang S."/>
            <person name="Taylor M.S."/>
            <person name="Tegner J."/>
            <person name="Teichmann S.A."/>
            <person name="Ueda H.R."/>
            <person name="van Nimwegen E."/>
            <person name="Verardo R."/>
            <person name="Wei C.L."/>
            <person name="Yagi K."/>
            <person name="Yamanishi H."/>
            <person name="Zabarovsky E."/>
            <person name="Zhu S."/>
            <person name="Zimmer A."/>
            <person name="Hide W."/>
            <person name="Bult C."/>
            <person name="Grimmond S.M."/>
            <person name="Teasdale R.D."/>
            <person name="Liu E.T."/>
            <person name="Brusic V."/>
            <person name="Quackenbush J."/>
            <person name="Wahlestedt C."/>
            <person name="Mattick J.S."/>
            <person name="Hume D.A."/>
            <person name="Kai C."/>
            <person name="Sasaki D."/>
            <person name="Tomaru Y."/>
            <person name="Fukuda S."/>
            <person name="Kanamori-Katayama M."/>
            <person name="Suzuki M."/>
            <person name="Aoki J."/>
            <person name="Arakawa T."/>
            <person name="Iida J."/>
            <person name="Imamura K."/>
            <person name="Itoh M."/>
            <person name="Kato T."/>
            <person name="Kawaji H."/>
            <person name="Kawagashira N."/>
            <person name="Kawashima T."/>
            <person name="Kojima M."/>
            <person name="Kondo S."/>
            <person name="Konno H."/>
            <person name="Nakano K."/>
            <person name="Ninomiya N."/>
            <person name="Nishio T."/>
            <person name="Okada M."/>
            <person name="Plessy C."/>
            <person name="Shibata K."/>
            <person name="Shiraki T."/>
            <person name="Suzuki S."/>
            <person name="Tagami M."/>
            <person name="Waki K."/>
            <person name="Watahiki A."/>
            <person name="Okamura-Oho Y."/>
            <person name="Suzuki H."/>
            <person name="Kawai J."/>
            <person name="Hayashizaki Y."/>
        </authorList>
    </citation>
    <scope>NUCLEOTIDE SEQUENCE [LARGE SCALE MRNA]</scope>
    <source>
        <strain>C57BL/6J</strain>
        <tissue>Kidney</tissue>
        <tissue>Pancreas</tissue>
    </source>
</reference>
<reference key="4">
    <citation type="journal article" date="2004" name="Genome Res.">
        <title>The status, quality, and expansion of the NIH full-length cDNA project: the Mammalian Gene Collection (MGC).</title>
        <authorList>
            <consortium name="The MGC Project Team"/>
        </authorList>
    </citation>
    <scope>NUCLEOTIDE SEQUENCE [LARGE SCALE MRNA]</scope>
    <source>
        <strain>FVB/N</strain>
        <tissue>Kidney</tissue>
    </source>
</reference>
<reference key="5">
    <citation type="journal article" date="2005" name="Cell Metab.">
        <title>The HNF-1 target collectrin controls insulin exocytosis by SNARE complex formation.</title>
        <authorList>
            <person name="Fukui K."/>
            <person name="Yang Q."/>
            <person name="Cao Y."/>
            <person name="Takahashi N."/>
            <person name="Hatakeyama H."/>
            <person name="Wang H."/>
            <person name="Wada J."/>
            <person name="Zhang Y."/>
            <person name="Marselli L."/>
            <person name="Nammo T."/>
            <person name="Yoneda K."/>
            <person name="Onishi M."/>
            <person name="Higashiyama S."/>
            <person name="Matsuzawa Y."/>
            <person name="Gonzalez F.J."/>
            <person name="Weir G.C."/>
            <person name="Kasai H."/>
            <person name="Shimomura I."/>
            <person name="Miyagawa J."/>
            <person name="Wollheim C.B."/>
            <person name="Yamagata K."/>
        </authorList>
    </citation>
    <scope>FUNCTION</scope>
    <scope>TISSUE SPECIFICITY</scope>
    <scope>GLYCOPROTEIN</scope>
    <scope>INTERACTION WITH SNAPIN</scope>
</reference>
<reference key="6">
    <citation type="journal article" date="2005" name="Cell Metab.">
        <title>Tmem27: a cleaved and shed plasma membrane protein that stimulates pancreatic beta cell proliferation.</title>
        <authorList>
            <person name="Akpinar P."/>
            <person name="Kuwajima S."/>
            <person name="Kruetzfeldt J."/>
            <person name="Stoffel M."/>
        </authorList>
    </citation>
    <scope>FUNCTION</scope>
    <scope>TISSUE SPECIFICITY</scope>
    <scope>GLYCOPROTEIN</scope>
    <scope>SUBUNIT</scope>
    <scope>PROTEOLYTIC PROCESSING IN BETA CELLS</scope>
    <scope>SUBCELLULAR LOCATION</scope>
</reference>
<reference key="7">
    <citation type="journal article" date="2006" name="Nature">
        <title>Essential role for collectrin in renal amino acid transport.</title>
        <authorList>
            <person name="Danilczyk U."/>
            <person name="Sarao R."/>
            <person name="Remy C."/>
            <person name="Benabbas C."/>
            <person name="Stange G."/>
            <person name="Richter A."/>
            <person name="Arya S."/>
            <person name="Pospisilik J.A."/>
            <person name="Singer D."/>
            <person name="Camargo S.M."/>
            <person name="Makrides V."/>
            <person name="Ramadan T."/>
            <person name="Verrey F."/>
            <person name="Wagner C.A."/>
            <person name="Penninger J.M."/>
        </authorList>
    </citation>
    <scope>DISRUPTION PHENOTYPE</scope>
    <scope>SUBCELLULAR LOCATION</scope>
    <scope>INTERACTION WITH SLC6A18; SLC6A19 AND SLC6A20B</scope>
    <scope>FUNCTION</scope>
    <scope>TISSUE SPECIFICITY</scope>
</reference>
<reference key="8">
    <citation type="journal article" date="2007" name="Am. J. Physiol.">
        <title>Aminoaciduria and altered renal expression of luminal amino acid transporters in mice lacking novel gene collectrin.</title>
        <authorList>
            <person name="Malakauskas S.M."/>
            <person name="Quan H."/>
            <person name="Fields T.A."/>
            <person name="McCall S.J."/>
            <person name="Yu M.J."/>
            <person name="Kourany W.M."/>
            <person name="Frey C.W."/>
            <person name="Le T.H."/>
        </authorList>
    </citation>
    <scope>FUNCTION</scope>
    <scope>TISSUE SPECIFICITY</scope>
    <scope>DISRUPTION PHENOTYPE</scope>
</reference>
<reference key="9">
    <citation type="journal article" date="2009" name="Biochem. Biophys. Res. Commun.">
        <title>Glucose enhances collectrin protein expression in insulin-producing MIN6 beta cells.</title>
        <authorList>
            <person name="Saisho K."/>
            <person name="Fukuhara A."/>
            <person name="Yasuda T."/>
            <person name="Sato Y."/>
            <person name="Fukui K."/>
            <person name="Iwahashi H."/>
            <person name="Imagawa A."/>
            <person name="Hatta M."/>
            <person name="Shimomura I."/>
            <person name="Yamagata K."/>
        </authorList>
    </citation>
    <scope>INDUCTION</scope>
</reference>
<reference key="10">
    <citation type="journal article" date="2009" name="J. Biol. Chem.">
        <title>Orphan transporter SLC6A18 is renal neutral amino acid transporter B0AT3.</title>
        <authorList>
            <person name="Singer D."/>
            <person name="Camargo S.M."/>
            <person name="Huggel K."/>
            <person name="Romeo E."/>
            <person name="Danilczyk U."/>
            <person name="Kuba K."/>
            <person name="Chesnov S."/>
            <person name="Caron M.G."/>
            <person name="Penninger J.M."/>
            <person name="Verrey F."/>
        </authorList>
    </citation>
    <scope>INTERACTION WITH SLC6A18</scope>
</reference>
<reference key="11">
    <citation type="journal article" date="2010" name="Cell">
        <title>A tissue-specific atlas of mouse protein phosphorylation and expression.</title>
        <authorList>
            <person name="Huttlin E.L."/>
            <person name="Jedrychowski M.P."/>
            <person name="Elias J.E."/>
            <person name="Goswami T."/>
            <person name="Rad R."/>
            <person name="Beausoleil S.A."/>
            <person name="Villen J."/>
            <person name="Haas W."/>
            <person name="Sowa M.E."/>
            <person name="Gygi S.P."/>
        </authorList>
    </citation>
    <scope>PHOSPHORYLATION [LARGE SCALE ANALYSIS] AT THR-214 AND THR-220</scope>
    <scope>IDENTIFICATION BY MASS SPECTROMETRY [LARGE SCALE ANALYSIS]</scope>
    <source>
        <tissue>Kidney</tissue>
    </source>
</reference>
<reference key="12">
    <citation type="journal article" date="2011" name="Cell Metab.">
        <title>Bace2 is a beta cell-enriched protease that regulates pancreatic beta cell function and mass.</title>
        <authorList>
            <person name="Esterhazy D."/>
            <person name="Stuetzer I."/>
            <person name="Wang H."/>
            <person name="Rechsteiner M.P."/>
            <person name="Beauchamp J."/>
            <person name="Doebeli H."/>
            <person name="Hilpert H."/>
            <person name="Matile H."/>
            <person name="Prummer M."/>
            <person name="Schmidt A."/>
            <person name="Lieske N."/>
            <person name="Boehm B."/>
            <person name="Marselli L."/>
            <person name="Bosco D."/>
            <person name="Kerr-Conte J."/>
            <person name="Aebersold R."/>
            <person name="Spinas G.A."/>
            <person name="Moch H."/>
            <person name="Migliorini C."/>
            <person name="Stoffel M."/>
        </authorList>
    </citation>
    <scope>SUBCELLULAR LOCATION</scope>
    <scope>PROTEOLYTIC PROCESSING</scope>
</reference>
<reference key="13">
    <citation type="journal article" date="2019" name="Am. J. Med. Genet. A">
        <title>Loss of CLTRN function produces a neuropsychiatric disorder and a biochemical phenotype that mimics Hartnup disease.</title>
        <authorList>
            <person name="Pillai N.R."/>
            <person name="Yubero D."/>
            <person name="Shayota B.J."/>
            <person name="Oyarzabal A."/>
            <person name="Ghosh R."/>
            <person name="Sun Q."/>
            <person name="Azamian M.S."/>
            <person name="Arjona C."/>
            <person name="Brandi N."/>
            <person name="Palau F."/>
            <person name="Lalani S.R."/>
            <person name="Artuch R."/>
            <person name="Garcia-Cazorla A."/>
            <person name="Scott D.A."/>
        </authorList>
    </citation>
    <scope>TISSUE SPECIFICITY</scope>
</reference>